<protein>
    <recommendedName>
        <fullName evidence="1">ATP synthase subunit b', chloroplastic</fullName>
    </recommendedName>
    <alternativeName>
        <fullName evidence="1">ATP synthase F(0) sector subunit b'</fullName>
    </alternativeName>
    <alternativeName>
        <fullName evidence="1">ATPase subunit II</fullName>
    </alternativeName>
</protein>
<evidence type="ECO:0000255" key="1">
    <source>
        <dbReference type="HAMAP-Rule" id="MF_01399"/>
    </source>
</evidence>
<name>ATPF2_EMIHU</name>
<reference key="1">
    <citation type="journal article" date="2005" name="DNA Res.">
        <title>The complete plastid genome sequence of the haptophyte Emiliania huxleyi: a comparison to other plastid genomes.</title>
        <authorList>
            <person name="Sanchez-Puerta M.V."/>
            <person name="Bachvaroff T.R."/>
            <person name="Delwiche C.F."/>
        </authorList>
    </citation>
    <scope>NUCLEOTIDE SEQUENCE [LARGE SCALE GENOMIC DNA]</scope>
    <source>
        <strain>CCMP373 / CSIRO-CS-57 / BT6</strain>
    </source>
</reference>
<reference key="2">
    <citation type="journal article" date="2006" name="J. Mol. Evol.">
        <title>Rate variation as a function of gene origin in plastid-derived genes of peridinin-containing dinoflagellates.</title>
        <authorList>
            <person name="Bachvaroff T.R."/>
            <person name="Sanchez-Puerta M.V."/>
            <person name="Delwiche C.F."/>
        </authorList>
    </citation>
    <scope>NUCLEOTIDE SEQUENCE [GENOMIC DNA]</scope>
    <source>
        <strain>CCMP373 / CSIRO-CS-57 / BT6</strain>
    </source>
</reference>
<accession>Q4G3A0</accession>
<organism>
    <name type="scientific">Emiliania huxleyi</name>
    <name type="common">Coccolithophore</name>
    <name type="synonym">Pontosphaera huxleyi</name>
    <dbReference type="NCBI Taxonomy" id="2903"/>
    <lineage>
        <taxon>Eukaryota</taxon>
        <taxon>Haptista</taxon>
        <taxon>Haptophyta</taxon>
        <taxon>Prymnesiophyceae</taxon>
        <taxon>Isochrysidales</taxon>
        <taxon>Noelaerhabdaceae</taxon>
        <taxon>Emiliania</taxon>
    </lineage>
</organism>
<sequence>MNNLIMLVTNAVTLSEAAGGLFDFNATLPLQALQFILLTVLLTFIFYKPIGKLLEERETFISNNLAEASAKLLKADELCEQYETQLKEAKTGAQDVIAKAESEAKGIVAQEITQARADAASLIAQTNKELEAQKKLALQQLETQIDELSQLIKEKLLGKVVL</sequence>
<feature type="chain" id="PRO_0000369060" description="ATP synthase subunit b', chloroplastic">
    <location>
        <begin position="1"/>
        <end position="162"/>
    </location>
</feature>
<feature type="transmembrane region" description="Helical" evidence="1">
    <location>
        <begin position="26"/>
        <end position="46"/>
    </location>
</feature>
<keyword id="KW-0066">ATP synthesis</keyword>
<keyword id="KW-0138">CF(0)</keyword>
<keyword id="KW-0150">Chloroplast</keyword>
<keyword id="KW-0375">Hydrogen ion transport</keyword>
<keyword id="KW-0406">Ion transport</keyword>
<keyword id="KW-0472">Membrane</keyword>
<keyword id="KW-0934">Plastid</keyword>
<keyword id="KW-0793">Thylakoid</keyword>
<keyword id="KW-0812">Transmembrane</keyword>
<keyword id="KW-1133">Transmembrane helix</keyword>
<keyword id="KW-0813">Transport</keyword>
<comment type="function">
    <text evidence="1">F(1)F(0) ATP synthase produces ATP from ADP in the presence of a proton or sodium gradient. F-type ATPases consist of two structural domains, F(1) containing the extramembraneous catalytic core and F(0) containing the membrane proton channel, linked together by a central stalk and a peripheral stalk. During catalysis, ATP synthesis in the catalytic domain of F(1) is coupled via a rotary mechanism of the central stalk subunits to proton translocation.</text>
</comment>
<comment type="function">
    <text evidence="1">Component of the F(0) channel, it forms part of the peripheral stalk, linking F(1) to F(0). The b'-subunit is a diverged and duplicated form of b found in plants and photosynthetic bacteria.</text>
</comment>
<comment type="subunit">
    <text evidence="1">F-type ATPases have 2 components, F(1) - the catalytic core - and F(0) - the membrane proton channel. F(1) has five subunits: alpha(3), beta(3), gamma(1), delta(1), epsilon(1). F(0) has four main subunits: a(1), b(1), b'(1) and c(10-14). The alpha and beta chains form an alternating ring which encloses part of the gamma chain. F(1) is attached to F(0) by a central stalk formed by the gamma and epsilon chains, while a peripheral stalk is formed by the delta, b and b' chains.</text>
</comment>
<comment type="subcellular location">
    <subcellularLocation>
        <location evidence="1">Plastid</location>
        <location evidence="1">Chloroplast thylakoid membrane</location>
        <topology evidence="1">Single-pass membrane protein</topology>
    </subcellularLocation>
</comment>
<comment type="miscellaneous">
    <text>In plastids the F-type ATPase is also known as CF(1)CF(0).</text>
</comment>
<comment type="similarity">
    <text evidence="1">Belongs to the ATPase B chain family.</text>
</comment>
<geneLocation type="chloroplast"/>
<gene>
    <name evidence="1" type="primary">atpF2</name>
    <name evidence="1" type="synonym">atpG</name>
</gene>
<proteinExistence type="inferred from homology"/>
<dbReference type="EMBL" id="AY704577">
    <property type="protein sequence ID" value="AAU81916.1"/>
    <property type="molecule type" value="Genomic_DNA"/>
</dbReference>
<dbReference type="EMBL" id="AY741371">
    <property type="protein sequence ID" value="AAX13866.1"/>
    <property type="molecule type" value="Genomic_DNA"/>
</dbReference>
<dbReference type="RefSeq" id="YP_277367.1">
    <property type="nucleotide sequence ID" value="NC_007288.1"/>
</dbReference>
<dbReference type="SMR" id="Q4G3A0"/>
<dbReference type="STRING" id="2903.Q4G3A0"/>
<dbReference type="GeneID" id="3562443"/>
<dbReference type="GO" id="GO:0009535">
    <property type="term" value="C:chloroplast thylakoid membrane"/>
    <property type="evidence" value="ECO:0007669"/>
    <property type="project" value="UniProtKB-SubCell"/>
</dbReference>
<dbReference type="GO" id="GO:0045259">
    <property type="term" value="C:proton-transporting ATP synthase complex"/>
    <property type="evidence" value="ECO:0007669"/>
    <property type="project" value="UniProtKB-KW"/>
</dbReference>
<dbReference type="GO" id="GO:0046933">
    <property type="term" value="F:proton-transporting ATP synthase activity, rotational mechanism"/>
    <property type="evidence" value="ECO:0007669"/>
    <property type="project" value="UniProtKB-UniRule"/>
</dbReference>
<dbReference type="GO" id="GO:0046961">
    <property type="term" value="F:proton-transporting ATPase activity, rotational mechanism"/>
    <property type="evidence" value="ECO:0007669"/>
    <property type="project" value="TreeGrafter"/>
</dbReference>
<dbReference type="CDD" id="cd06503">
    <property type="entry name" value="ATP-synt_Fo_b"/>
    <property type="match status" value="1"/>
</dbReference>
<dbReference type="Gene3D" id="1.20.5.620">
    <property type="entry name" value="F1F0 ATP synthase subunit B, membrane domain"/>
    <property type="match status" value="1"/>
</dbReference>
<dbReference type="HAMAP" id="MF_01398">
    <property type="entry name" value="ATP_synth_b_bprime"/>
    <property type="match status" value="1"/>
</dbReference>
<dbReference type="HAMAP" id="MF_01399">
    <property type="entry name" value="ATP_synth_bprime"/>
    <property type="match status" value="1"/>
</dbReference>
<dbReference type="InterPro" id="IPR034679">
    <property type="entry name" value="ATP_synth_b"/>
</dbReference>
<dbReference type="InterPro" id="IPR028987">
    <property type="entry name" value="ATP_synth_B-like_membr_sf"/>
</dbReference>
<dbReference type="InterPro" id="IPR002146">
    <property type="entry name" value="ATP_synth_b/b'su_bac/chlpt"/>
</dbReference>
<dbReference type="InterPro" id="IPR005864">
    <property type="entry name" value="ATP_synth_F0_bsu_bac"/>
</dbReference>
<dbReference type="InterPro" id="IPR050059">
    <property type="entry name" value="ATP_synthase_B_chain"/>
</dbReference>
<dbReference type="NCBIfam" id="TIGR01144">
    <property type="entry name" value="ATP_synt_b"/>
    <property type="match status" value="1"/>
</dbReference>
<dbReference type="NCBIfam" id="NF005607">
    <property type="entry name" value="PRK07353.1"/>
    <property type="match status" value="1"/>
</dbReference>
<dbReference type="PANTHER" id="PTHR33445">
    <property type="entry name" value="ATP SYNTHASE SUBUNIT B', CHLOROPLASTIC"/>
    <property type="match status" value="1"/>
</dbReference>
<dbReference type="PANTHER" id="PTHR33445:SF2">
    <property type="entry name" value="ATP SYNTHASE SUBUNIT B', CHLOROPLASTIC"/>
    <property type="match status" value="1"/>
</dbReference>
<dbReference type="Pfam" id="PF00430">
    <property type="entry name" value="ATP-synt_B"/>
    <property type="match status" value="1"/>
</dbReference>
<dbReference type="SUPFAM" id="SSF81573">
    <property type="entry name" value="F1F0 ATP synthase subunit B, membrane domain"/>
    <property type="match status" value="1"/>
</dbReference>